<proteinExistence type="evidence at protein level"/>
<accession>Q9Y2K2</accession>
<accession>A1A5A8</accession>
<accession>H0Y494</accession>
<accession>J3KPC8</accession>
<accession>Q59FY2</accession>
<accession>Q5M9N1</accession>
<accession>Q6P3R6</accession>
<accession>Q8IYM8</accession>
<accession>Q9HA50</accession>
<sequence>MAAAAASGAGGAAGAGTGGAGPAGRLLPPPAPGSPAAPAAVSPAAGQPRPPAPASRGPMPARIGYYEIDRTIGKGNFAVVKRATHLVTKAKVAIKIIDKTQLDEENLKKIFREVQIMKMLCHPHIIRLYQVMETERMIYLVTEYASGGEIFDHLVAHGRMAEKEARRKFKQIVTAVYFCHCRNIVHRDLKAENLLLDANLNIKIADFGFSNLFTPGQLLKTWCGSPPYAAPELFEGKEYDGPKVDIWSLGVVLYVLVCGALPFDGSTLQNLRARVLSGKFRIPFFMSTECEHLIRHMLVLDPNKRLSMEQICKHKWMKLGDADPNFDRLIAECQQLKEERQVDPLNEDVLLAMEDMGLDKEQTLQSLRSDAYDHYSAIYSLLCDRHKRHKTLRLGALPSMPRALAFQAPVNIQAEQAGTAMNISVPQVQLINPENQIVEPDGTLNLDSDEGEEPSPEALVRYLSMRRHTVGVADPRTEVMEDLQKLLPGFPGVNPQAPFLQVAPNVNFMHNLLPMQNLQPTGQLEYKEQSLLQPPTLQLLNGMGPLGRRASDGGANIQLHAQQLLKRPRGPSPLVTMTPAVPAVTPVDEESSDGEPDQEAVQSSTYKDSNTLHLPTERFSPVRRFSDGAASIQAFKAHLEKMGNNSSIKQLQQECEQLQKMYGGQIDERTLEKTQQQHMLYQQEQHHQILQQQIQDSICPPQPSPPLQAACENQPALLTHQLQRLRIQPSSPPPNHPNNHLFRQPSNSPPPMSSAMIQPHGAASSSQFQGLPSRSAIFQQQPENCSSPPNVALTCLGMQQPAQSQQVTIQVQEPVDMLSNMPGTAAGSSGRGISISPSAGQMQMQHRTNLMATLSYGHRPLSKQLSADSAEAHSLNVNRFSPANYDQAHLHPHLFSDQSRGSPSSYSPSTGVGFSPTQALKVPPLDQFPTFPPSAHQQPPHYTTSALQQALLSPTPPDYTRHQQVPHILQGLLSPRHSLTGHSDIRLPPTEFAQLIKRQQQQRQQQQQQQQQQEYQELFRHMNQGDAGSLAPSLGGQSMTERQALSYQNADSYHHHTSPQHLLQIRAQECVSQASSPTPPHGYAHQPALMHSESMEEDCSCEGAKDGFQDSKSSSTLTKGCHDSPLLLSTGGPGDPESLLGTVSHAQELGIHPYGHQPTAAFSKNKVPSREPVIGNCMDRSSPGQAVELPDHNGLGYPARPSVHEHHRPRALQRHHTIQNSDDAYVQLDNLPGMSLVAGKALSSARMSDAVLSQSSLMGSQQFQDGENEECGASLGGHEHPDLSDGSQHLNSSCYPSTCITDILLSYKHPEVSFSMEQAGV</sequence>
<gene>
    <name evidence="17" type="primary">SIK3</name>
    <name evidence="13" type="synonym">KIAA0999</name>
    <name evidence="14" type="synonym">QSK</name>
    <name type="ORF">L19</name>
</gene>
<feature type="chain" id="PRO_0000252257" description="Serine/threonine-protein kinase SIK3">
    <location>
        <begin position="1"/>
        <end position="1321"/>
    </location>
</feature>
<feature type="domain" description="Protein kinase" evidence="3">
    <location>
        <begin position="66"/>
        <end position="317"/>
    </location>
</feature>
<feature type="domain" description="UBA" evidence="4">
    <location>
        <begin position="344"/>
        <end position="384"/>
    </location>
</feature>
<feature type="region of interest" description="Disordered" evidence="6">
    <location>
        <begin position="1"/>
        <end position="59"/>
    </location>
</feature>
<feature type="region of interest" description="Disordered" evidence="6">
    <location>
        <begin position="585"/>
        <end position="614"/>
    </location>
</feature>
<feature type="region of interest" description="Disordered" evidence="6">
    <location>
        <begin position="727"/>
        <end position="772"/>
    </location>
</feature>
<feature type="region of interest" description="Disordered" evidence="6">
    <location>
        <begin position="894"/>
        <end position="945"/>
    </location>
</feature>
<feature type="region of interest" description="Disordered" evidence="6">
    <location>
        <begin position="1256"/>
        <end position="1289"/>
    </location>
</feature>
<feature type="compositionally biased region" description="Gly residues" evidence="6">
    <location>
        <begin position="8"/>
        <end position="22"/>
    </location>
</feature>
<feature type="compositionally biased region" description="Low complexity" evidence="6">
    <location>
        <begin position="36"/>
        <end position="47"/>
    </location>
</feature>
<feature type="compositionally biased region" description="Acidic residues" evidence="6">
    <location>
        <begin position="587"/>
        <end position="598"/>
    </location>
</feature>
<feature type="compositionally biased region" description="Polar residues" evidence="6">
    <location>
        <begin position="600"/>
        <end position="613"/>
    </location>
</feature>
<feature type="compositionally biased region" description="Polar residues" evidence="6">
    <location>
        <begin position="763"/>
        <end position="772"/>
    </location>
</feature>
<feature type="compositionally biased region" description="Low complexity" evidence="6">
    <location>
        <begin position="896"/>
        <end position="909"/>
    </location>
</feature>
<feature type="compositionally biased region" description="Polar residues" evidence="6">
    <location>
        <begin position="935"/>
        <end position="945"/>
    </location>
</feature>
<feature type="compositionally biased region" description="Polar residues" evidence="6">
    <location>
        <begin position="1256"/>
        <end position="1265"/>
    </location>
</feature>
<feature type="active site" description="Proton acceptor" evidence="3 5">
    <location>
        <position position="188"/>
    </location>
</feature>
<feature type="binding site" evidence="3">
    <location>
        <begin position="72"/>
        <end position="80"/>
    </location>
    <ligand>
        <name>ATP</name>
        <dbReference type="ChEBI" id="CHEBI:30616"/>
    </ligand>
</feature>
<feature type="binding site" evidence="3">
    <location>
        <position position="95"/>
    </location>
    <ligand>
        <name>ATP</name>
        <dbReference type="ChEBI" id="CHEBI:30616"/>
    </ligand>
</feature>
<feature type="modified residue" description="Phosphothreonine" evidence="19">
    <location>
        <position position="71"/>
    </location>
</feature>
<feature type="modified residue" description="Phosphothreonine; by LKB1" evidence="7 11 19 21">
    <location>
        <position position="221"/>
    </location>
</feature>
<feature type="modified residue" description="Phosphothreonine" evidence="10 21 22">
    <location>
        <position position="469"/>
    </location>
</feature>
<feature type="modified residue" description="Phosphoserine" evidence="19 21">
    <location>
        <position position="551"/>
    </location>
</feature>
<feature type="modified residue" description="Phosphoserine" evidence="1">
    <location>
        <position position="591"/>
    </location>
</feature>
<feature type="modified residue" description="Phosphoserine" evidence="1">
    <location>
        <position position="592"/>
    </location>
</feature>
<feature type="modified residue" description="Phosphoserine" evidence="18 19 21 22">
    <location>
        <position position="626"/>
    </location>
</feature>
<feature type="modified residue" description="Phosphoserine" evidence="1">
    <location>
        <position position="647"/>
    </location>
</feature>
<feature type="modified residue" description="Phosphoserine" evidence="19 21">
    <location>
        <position position="866"/>
    </location>
</feature>
<feature type="modified residue" description="Phosphoserine" evidence="22">
    <location>
        <position position="978"/>
    </location>
</feature>
<feature type="modified residue" description="Omega-N-methylarginine" evidence="1">
    <location>
        <position position="986"/>
    </location>
</feature>
<feature type="splice variant" id="VSP_059412" description="In isoform 2.">
    <original>MAAAAASGAGGAAGAGTGGAGPAGRLLPPPAPGSPAAPAAVSPAAGQPRPPAPASRGPMPARIGYYEIDRTIGKGNFAVVKRATHLVTKAKVAIKIIDKTQLDEENLKKIFREVQIMKMLCHPHIIRLYQVMETERMIYLVTEYASGGEIFDHLVAHGRMAEKEARRKFKQIVTAVYFCHCRNIVHRDLKAENLLLDANLNIKIADFGFSNLFTPGQLLKTWCGSPPYAAPELFEGKEYDGPKVDIWSLGVVLYVLVCGALPFDGSTLQNLRARVLSGKFRIPFFMSTECEHLIRHMLVLDPNKRLSMEQICKHKWMKLGDADPNFDRLIAECQQLKEERQVDPLNEDVLLAMEDMGLDKEQTLQSLRSDAYDHYSAIYSLLCDRHKRHKTLRLGALPSMPRALAFQAPVNIQAEQAGTAMNISVPQVQLINPENQIVEPDGTLNLDSDEGEEPSPEALVRYLSMRRHTVGVADPRTEVMEDLQKLLPGFPGVNPQAPFLQVAPNVNFMHNLLPMQNLQPTGQLEYKEQSLLQPPTLQLLNGMGPLGRRASDGGANIQLHAQQLLKRPRGPSPLVTMTPAVPAVTPVDEESSDGEPDQEAVQSSTYKDSNTLHLPTERFSPVRRFSDGAASIQAFKAHLEKMGNNSSIKQLQQECEQLQKMYGGQIDERTLEKTQQQHMLYQQEQHHQILQQQIQDSICPPQPSPPLQAACENQPALLTHQLQRLRIQPSSPPPNHPNNHLFRQPSNSPPPMSSAMIQPH</original>
    <variation>MACSTPHGSNRRLPRKCHFSLPTRTPTLCTSLRSVSPLCAGSQMGLRASRPSKLTWKKWATTAASNSCSRSVSSCRRCTGGRLMKEPWRRPSSSICYTSRSSTIKFSSNKFKTLSVLLSHLHLFRLHVKISQPSLPISSR</variation>
    <location>
        <begin position="1"/>
        <end position="760"/>
    </location>
</feature>
<feature type="splice variant" id="VSP_059413" description="In isoform 4.">
    <location>
        <begin position="365"/>
        <end position="412"/>
    </location>
</feature>
<feature type="splice variant" id="VSP_059414" description="In isoform 4.">
    <original>S</original>
    <variation>RYLANRSKRHTLAMTNPTAEIPPDLQRQLGQQPFRSRVWPPHLVPDQHR</variation>
    <location>
        <position position="603"/>
    </location>
</feature>
<feature type="splice variant" id="VSP_059415" description="In isoform 2 and isoform 4.">
    <location>
        <begin position="874"/>
        <end position="933"/>
    </location>
</feature>
<feature type="splice variant" id="VSP_059416" description="In isoform 3.">
    <original>EPVIGNCMDRSSPGQAV</original>
    <variation>GKCLLTVEVLGQSALIN</variation>
    <location>
        <begin position="1171"/>
        <end position="1187"/>
    </location>
</feature>
<feature type="splice variant" id="VSP_059417" description="In isoform 3.">
    <location>
        <begin position="1188"/>
        <end position="1321"/>
    </location>
</feature>
<feature type="sequence variant" id="VAR_081542" description="In SEMDK; decreased protein expression; decreased kinase activity; no effect on the interaction with DEPTOR, MLST8/GbetaL, RICTOR and RPTOR; dbSNP:rs1565460853." evidence="11">
    <original>R</original>
    <variation>C</variation>
    <location>
        <position position="187"/>
    </location>
</feature>
<feature type="sequence variant" id="VAR_035634" description="In a breast cancer sample; somatic mutation; dbSNP:rs376144593." evidence="9">
    <original>H</original>
    <variation>L</variation>
    <location>
        <position position="389"/>
    </location>
</feature>
<feature type="sequence variant" id="VAR_051662" description="In dbSNP:rs11216163.">
    <original>D</original>
    <variation>E</variation>
    <location>
        <position position="1098"/>
    </location>
</feature>
<feature type="sequence variant" id="VAR_051663" description="In dbSNP:rs12225230." evidence="12">
    <original>P</original>
    <variation>R</variation>
    <location>
        <position position="1136"/>
    </location>
</feature>
<feature type="sequence variant" id="VAR_035635" description="In a breast cancer sample; somatic mutation; dbSNP:rs1943041328." evidence="9">
    <original>A</original>
    <variation>V</variation>
    <location>
        <position position="1161"/>
    </location>
</feature>
<feature type="mutagenesis site" description="Prevents phosphorylation and activation by STK11/LKB1 complex." evidence="7">
    <original>T</original>
    <variation>A</variation>
    <location>
        <position position="221"/>
    </location>
</feature>
<feature type="mutagenesis site" description="Loss of interaction with 14-3-3 proteins in response to cAMP signaling; inhibits cAMP signaling." evidence="10">
    <original>T</original>
    <variation>A</variation>
    <location>
        <position position="469"/>
    </location>
</feature>
<feature type="mutagenesis site" description="Loss of interaction with 14-3-3 proteins in response to cAMP signaling; inhibits cAMP signaling." evidence="10">
    <original>T</original>
    <variation>E</variation>
    <location>
        <position position="469"/>
    </location>
</feature>
<feature type="mutagenesis site" description="Loss of interaction with 14-3-3 proteins in response to cAMP signaling; inhibits cAMP signaling." evidence="10">
    <original>S</original>
    <variation>A</variation>
    <location>
        <position position="551"/>
    </location>
</feature>
<feature type="mutagenesis site" description="Loss of interaction with 14-3-3 proteins in response to cAMP signaling; inhibits cAMP signaling." evidence="10">
    <original>S</original>
    <variation>E</variation>
    <location>
        <position position="551"/>
    </location>
</feature>
<feature type="mutagenesis site" description="No effect on interaction with 14-3-3 proteins, nor on cAMP signaling." evidence="10">
    <original>S</original>
    <variation>A</variation>
    <location>
        <position position="626"/>
    </location>
</feature>
<feature type="mutagenesis site" description="No effect on cAMP signaling." evidence="10">
    <original>S</original>
    <variation>E</variation>
    <location>
        <position position="626"/>
    </location>
</feature>
<feature type="strand" evidence="25">
    <location>
        <begin position="66"/>
        <end position="75"/>
    </location>
</feature>
<feature type="strand" evidence="25">
    <location>
        <begin position="78"/>
        <end position="85"/>
    </location>
</feature>
<feature type="turn" evidence="25">
    <location>
        <begin position="86"/>
        <end position="88"/>
    </location>
</feature>
<feature type="strand" evidence="25">
    <location>
        <begin position="91"/>
        <end position="98"/>
    </location>
</feature>
<feature type="turn" evidence="24">
    <location>
        <begin position="99"/>
        <end position="101"/>
    </location>
</feature>
<feature type="helix" evidence="25">
    <location>
        <begin position="104"/>
        <end position="118"/>
    </location>
</feature>
<feature type="strand" evidence="25">
    <location>
        <begin position="128"/>
        <end position="133"/>
    </location>
</feature>
<feature type="strand" evidence="25">
    <location>
        <begin position="135"/>
        <end position="143"/>
    </location>
</feature>
<feature type="helix" evidence="25">
    <location>
        <begin position="150"/>
        <end position="157"/>
    </location>
</feature>
<feature type="helix" evidence="25">
    <location>
        <begin position="162"/>
        <end position="181"/>
    </location>
</feature>
<feature type="strand" evidence="24">
    <location>
        <begin position="191"/>
        <end position="196"/>
    </location>
</feature>
<feature type="strand" evidence="25">
    <location>
        <begin position="202"/>
        <end position="204"/>
    </location>
</feature>
<feature type="helix" evidence="25">
    <location>
        <begin position="226"/>
        <end position="228"/>
    </location>
</feature>
<feature type="helix" evidence="25">
    <location>
        <begin position="231"/>
        <end position="234"/>
    </location>
</feature>
<feature type="helix" evidence="25">
    <location>
        <begin position="241"/>
        <end position="258"/>
    </location>
</feature>
<feature type="helix" evidence="25">
    <location>
        <begin position="268"/>
        <end position="277"/>
    </location>
</feature>
<feature type="helix" evidence="25">
    <location>
        <begin position="288"/>
        <end position="297"/>
    </location>
</feature>
<feature type="helix" evidence="25">
    <location>
        <begin position="302"/>
        <end position="304"/>
    </location>
</feature>
<feature type="helix" evidence="25">
    <location>
        <begin position="308"/>
        <end position="313"/>
    </location>
</feature>
<feature type="helix" evidence="25">
    <location>
        <begin position="315"/>
        <end position="318"/>
    </location>
</feature>
<feature type="strand" evidence="25">
    <location>
        <begin position="319"/>
        <end position="321"/>
    </location>
</feature>
<feature type="helix" evidence="25">
    <location>
        <begin position="324"/>
        <end position="334"/>
    </location>
</feature>
<feature type="turn" evidence="23">
    <location>
        <begin position="337"/>
        <end position="339"/>
    </location>
</feature>
<feature type="helix" evidence="25">
    <location>
        <begin position="347"/>
        <end position="356"/>
    </location>
</feature>
<feature type="helix" evidence="25">
    <location>
        <begin position="360"/>
        <end position="368"/>
    </location>
</feature>
<feature type="helix" evidence="25">
    <location>
        <begin position="374"/>
        <end position="383"/>
    </location>
</feature>
<feature type="modified residue" description="Phosphothreonine" evidence="20">
    <location sequence="Q9Y2K2-6">
        <position position="113"/>
    </location>
</feature>
<reference key="1">
    <citation type="journal article" date="2004" name="EMBO J.">
        <title>LKB1 is a master kinase that activates 13 kinases of the AMPK subfamily, including MARK/PAR-1.</title>
        <authorList>
            <person name="Lizcano J.M."/>
            <person name="Goeransson O."/>
            <person name="Toth R."/>
            <person name="Deak M."/>
            <person name="Morrice N.A."/>
            <person name="Boudeau J."/>
            <person name="Hawley S.A."/>
            <person name="Udd L."/>
            <person name="Maekelae T.P."/>
            <person name="Hardie D.G."/>
            <person name="Alessi D.R."/>
        </authorList>
    </citation>
    <scope>NUCLEOTIDE SEQUENCE [MRNA]</scope>
    <scope>FUNCTION</scope>
    <scope>ACTIVITY REGULATION</scope>
    <scope>PHOSPHORYLATION AT THR-221</scope>
    <scope>MUTAGENESIS OF THR-221</scope>
</reference>
<reference key="2">
    <citation type="journal article" date="2006" name="Nature">
        <title>Human chromosome 11 DNA sequence and analysis including novel gene identification.</title>
        <authorList>
            <person name="Taylor T.D."/>
            <person name="Noguchi H."/>
            <person name="Totoki Y."/>
            <person name="Toyoda A."/>
            <person name="Kuroki Y."/>
            <person name="Dewar K."/>
            <person name="Lloyd C."/>
            <person name="Itoh T."/>
            <person name="Takeda T."/>
            <person name="Kim D.-W."/>
            <person name="She X."/>
            <person name="Barlow K.F."/>
            <person name="Bloom T."/>
            <person name="Bruford E."/>
            <person name="Chang J.L."/>
            <person name="Cuomo C.A."/>
            <person name="Eichler E."/>
            <person name="FitzGerald M.G."/>
            <person name="Jaffe D.B."/>
            <person name="LaButti K."/>
            <person name="Nicol R."/>
            <person name="Park H.-S."/>
            <person name="Seaman C."/>
            <person name="Sougnez C."/>
            <person name="Yang X."/>
            <person name="Zimmer A.R."/>
            <person name="Zody M.C."/>
            <person name="Birren B.W."/>
            <person name="Nusbaum C."/>
            <person name="Fujiyama A."/>
            <person name="Hattori M."/>
            <person name="Rogers J."/>
            <person name="Lander E.S."/>
            <person name="Sakaki Y."/>
        </authorList>
    </citation>
    <scope>NUCLEOTIDE SEQUENCE [LARGE SCALE GENOMIC DNA]</scope>
</reference>
<reference key="3">
    <citation type="journal article" date="2004" name="Genome Res.">
        <title>The status, quality, and expansion of the NIH full-length cDNA project: the Mammalian Gene Collection (MGC).</title>
        <authorList>
            <consortium name="The MGC Project Team"/>
        </authorList>
    </citation>
    <scope>NUCLEOTIDE SEQUENCE [LARGE SCALE MRNA] (ISOFORM 2)</scope>
    <scope>NUCLEOTIDE SEQUENCE [MRNA] OF 47-1321 (ISOFORM 4)</scope>
    <scope>NUCLEOTIDE SEQUENCE [LARGE SCALE MRNA] OF 725-1321 (ISOFORM 3)</scope>
    <scope>NUCLEOTIDE SEQUENCE [LARGE SCALE MRNA] OF 816-1321 (ISOFORM 1)</scope>
    <source>
        <tissue>Testis</tissue>
        <tissue>Uterus</tissue>
    </source>
</reference>
<reference key="4">
    <citation type="journal article" date="1999" name="DNA Res.">
        <title>Prediction of the coding sequences of unidentified human genes. XIII. The complete sequences of 100 new cDNA clones from brain which code for large proteins in vitro.</title>
        <authorList>
            <person name="Nagase T."/>
            <person name="Ishikawa K."/>
            <person name="Suyama M."/>
            <person name="Kikuno R."/>
            <person name="Hirosawa M."/>
            <person name="Miyajima N."/>
            <person name="Tanaka A."/>
            <person name="Kotani H."/>
            <person name="Nomura N."/>
            <person name="Ohara O."/>
        </authorList>
    </citation>
    <scope>NUCLEOTIDE SEQUENCE [LARGE SCALE MRNA] OF 8-1321 (ISOFORM 1)</scope>
    <source>
        <tissue>Brain</tissue>
    </source>
</reference>
<reference key="5">
    <citation type="journal article" date="2002" name="DNA Res.">
        <title>Construction of expression-ready cDNA clones for KIAA genes: manual curation of 330 KIAA cDNA clones.</title>
        <authorList>
            <person name="Nakajima D."/>
            <person name="Okazaki N."/>
            <person name="Yamakawa H."/>
            <person name="Kikuno R."/>
            <person name="Ohara O."/>
            <person name="Nagase T."/>
        </authorList>
    </citation>
    <scope>SEQUENCE REVISION</scope>
</reference>
<reference key="6">
    <citation type="submission" date="2005-03" db="EMBL/GenBank/DDBJ databases">
        <authorList>
            <person name="Totoki Y."/>
            <person name="Toyoda A."/>
            <person name="Takeda T."/>
            <person name="Sakaki Y."/>
            <person name="Tanaka A."/>
            <person name="Yokoyama S."/>
            <person name="Ohara O."/>
            <person name="Nagase T."/>
            <person name="Kikuno R.F."/>
        </authorList>
    </citation>
    <scope>NUCLEOTIDE SEQUENCE [LARGE SCALE MRNA] OF 331-1321 (ISOFORM 1)</scope>
    <scope>VARIANT ARG-1136</scope>
    <source>
        <tissue>Brain</tissue>
    </source>
</reference>
<reference key="7">
    <citation type="journal article" date="2004" name="Nat. Genet.">
        <title>Complete sequencing and characterization of 21,243 full-length human cDNAs.</title>
        <authorList>
            <person name="Ota T."/>
            <person name="Suzuki Y."/>
            <person name="Nishikawa T."/>
            <person name="Otsuki T."/>
            <person name="Sugiyama T."/>
            <person name="Irie R."/>
            <person name="Wakamatsu A."/>
            <person name="Hayashi K."/>
            <person name="Sato H."/>
            <person name="Nagai K."/>
            <person name="Kimura K."/>
            <person name="Makita H."/>
            <person name="Sekine M."/>
            <person name="Obayashi M."/>
            <person name="Nishi T."/>
            <person name="Shibahara T."/>
            <person name="Tanaka T."/>
            <person name="Ishii S."/>
            <person name="Yamamoto J."/>
            <person name="Saito K."/>
            <person name="Kawai Y."/>
            <person name="Isono Y."/>
            <person name="Nakamura Y."/>
            <person name="Nagahari K."/>
            <person name="Murakami K."/>
            <person name="Yasuda T."/>
            <person name="Iwayanagi T."/>
            <person name="Wagatsuma M."/>
            <person name="Shiratori A."/>
            <person name="Sudo H."/>
            <person name="Hosoiri T."/>
            <person name="Kaku Y."/>
            <person name="Kodaira H."/>
            <person name="Kondo H."/>
            <person name="Sugawara M."/>
            <person name="Takahashi M."/>
            <person name="Kanda K."/>
            <person name="Yokoi T."/>
            <person name="Furuya T."/>
            <person name="Kikkawa E."/>
            <person name="Omura Y."/>
            <person name="Abe K."/>
            <person name="Kamihara K."/>
            <person name="Katsuta N."/>
            <person name="Sato K."/>
            <person name="Tanikawa M."/>
            <person name="Yamazaki M."/>
            <person name="Ninomiya K."/>
            <person name="Ishibashi T."/>
            <person name="Yamashita H."/>
            <person name="Murakawa K."/>
            <person name="Fujimori K."/>
            <person name="Tanai H."/>
            <person name="Kimata M."/>
            <person name="Watanabe M."/>
            <person name="Hiraoka S."/>
            <person name="Chiba Y."/>
            <person name="Ishida S."/>
            <person name="Ono Y."/>
            <person name="Takiguchi S."/>
            <person name="Watanabe S."/>
            <person name="Yosida M."/>
            <person name="Hotuta T."/>
            <person name="Kusano J."/>
            <person name="Kanehori K."/>
            <person name="Takahashi-Fujii A."/>
            <person name="Hara H."/>
            <person name="Tanase T.-O."/>
            <person name="Nomura Y."/>
            <person name="Togiya S."/>
            <person name="Komai F."/>
            <person name="Hara R."/>
            <person name="Takeuchi K."/>
            <person name="Arita M."/>
            <person name="Imose N."/>
            <person name="Musashino K."/>
            <person name="Yuuki H."/>
            <person name="Oshima A."/>
            <person name="Sasaki N."/>
            <person name="Aotsuka S."/>
            <person name="Yoshikawa Y."/>
            <person name="Matsunawa H."/>
            <person name="Ichihara T."/>
            <person name="Shiohata N."/>
            <person name="Sano S."/>
            <person name="Moriya S."/>
            <person name="Momiyama H."/>
            <person name="Satoh N."/>
            <person name="Takami S."/>
            <person name="Terashima Y."/>
            <person name="Suzuki O."/>
            <person name="Nakagawa S."/>
            <person name="Senoh A."/>
            <person name="Mizoguchi H."/>
            <person name="Goto Y."/>
            <person name="Shimizu F."/>
            <person name="Wakebe H."/>
            <person name="Hishigaki H."/>
            <person name="Watanabe T."/>
            <person name="Sugiyama A."/>
            <person name="Takemoto M."/>
            <person name="Kawakami B."/>
            <person name="Yamazaki M."/>
            <person name="Watanabe K."/>
            <person name="Kumagai A."/>
            <person name="Itakura S."/>
            <person name="Fukuzumi Y."/>
            <person name="Fujimori Y."/>
            <person name="Komiyama M."/>
            <person name="Tashiro H."/>
            <person name="Tanigami A."/>
            <person name="Fujiwara T."/>
            <person name="Ono T."/>
            <person name="Yamada K."/>
            <person name="Fujii Y."/>
            <person name="Ozaki K."/>
            <person name="Hirao M."/>
            <person name="Ohmori Y."/>
            <person name="Kawabata A."/>
            <person name="Hikiji T."/>
            <person name="Kobatake N."/>
            <person name="Inagaki H."/>
            <person name="Ikema Y."/>
            <person name="Okamoto S."/>
            <person name="Okitani R."/>
            <person name="Kawakami T."/>
            <person name="Noguchi S."/>
            <person name="Itoh T."/>
            <person name="Shigeta K."/>
            <person name="Senba T."/>
            <person name="Matsumura K."/>
            <person name="Nakajima Y."/>
            <person name="Mizuno T."/>
            <person name="Morinaga M."/>
            <person name="Sasaki M."/>
            <person name="Togashi T."/>
            <person name="Oyama M."/>
            <person name="Hata H."/>
            <person name="Watanabe M."/>
            <person name="Komatsu T."/>
            <person name="Mizushima-Sugano J."/>
            <person name="Satoh T."/>
            <person name="Shirai Y."/>
            <person name="Takahashi Y."/>
            <person name="Nakagawa K."/>
            <person name="Okumura K."/>
            <person name="Nagase T."/>
            <person name="Nomura N."/>
            <person name="Kikuchi H."/>
            <person name="Masuho Y."/>
            <person name="Yamashita R."/>
            <person name="Nakai K."/>
            <person name="Yada T."/>
            <person name="Nakamura Y."/>
            <person name="Ohara O."/>
            <person name="Isogai T."/>
            <person name="Sugano S."/>
        </authorList>
    </citation>
    <scope>NUCLEOTIDE SEQUENCE [LARGE SCALE MRNA] OF 816-1321 (ISOFORM 1)</scope>
    <source>
        <tissue>Mammary gland</tissue>
    </source>
</reference>
<reference key="8">
    <citation type="journal article" date="2004" name="Oncogene">
        <title>Suppression subtractive hybridization and expression profiling identifies a unique set of genes overexpressed in non-small-cell lung cancer.</title>
        <authorList>
            <person name="Petroziello J."/>
            <person name="Yamane A."/>
            <person name="Westendorf L."/>
            <person name="Thompson M."/>
            <person name="McDonagh C."/>
            <person name="Cerveny C."/>
            <person name="Law C.-L."/>
            <person name="Wahl A."/>
            <person name="Carter P."/>
        </authorList>
    </citation>
    <scope>NUCLEOTIDE SEQUENCE [MRNA] OF 817-1321 (ISOFORM 1)</scope>
</reference>
<reference key="9">
    <citation type="journal article" date="2005" name="J. Cell Sci.">
        <title>14-3-3 cooperates with LKB1 to regulate the activity and localization of QSK and SIK.</title>
        <authorList>
            <person name="Al-Hakim A.K."/>
            <person name="Goransson O."/>
            <person name="Deak M."/>
            <person name="Toth R."/>
            <person name="Campbell D.G."/>
            <person name="Morrice N.A."/>
            <person name="Prescott A.R."/>
            <person name="Alessi D.R."/>
        </authorList>
    </citation>
    <scope>FUNCTION</scope>
    <scope>SUBCELLULAR LOCATION</scope>
    <scope>INTERACTION WITH YWHAZ</scope>
</reference>
<reference key="10">
    <citation type="journal article" date="2008" name="Proc. Natl. Acad. Sci. U.S.A.">
        <title>A quantitative atlas of mitotic phosphorylation.</title>
        <authorList>
            <person name="Dephoure N."/>
            <person name="Zhou C."/>
            <person name="Villen J."/>
            <person name="Beausoleil S.A."/>
            <person name="Bakalarski C.E."/>
            <person name="Elledge S.J."/>
            <person name="Gygi S.P."/>
        </authorList>
    </citation>
    <scope>PHOSPHORYLATION [LARGE SCALE ANALYSIS] AT SER-626</scope>
    <scope>IDENTIFICATION BY MASS SPECTROMETRY [LARGE SCALE ANALYSIS]</scope>
    <source>
        <tissue>Cervix carcinoma</tissue>
    </source>
</reference>
<reference key="11">
    <citation type="journal article" date="2009" name="Mol. Cell. Proteomics">
        <title>Large-scale proteomics analysis of the human kinome.</title>
        <authorList>
            <person name="Oppermann F.S."/>
            <person name="Gnad F."/>
            <person name="Olsen J.V."/>
            <person name="Hornberger R."/>
            <person name="Greff Z."/>
            <person name="Keri G."/>
            <person name="Mann M."/>
            <person name="Daub H."/>
        </authorList>
    </citation>
    <scope>PHOSPHORYLATION [LARGE SCALE ANALYSIS] AT THR-71; THR-221; SER-551; SER-626 AND SER-866</scope>
    <scope>IDENTIFICATION BY MASS SPECTROMETRY [LARGE SCALE ANALYSIS]</scope>
</reference>
<reference key="12">
    <citation type="journal article" date="2009" name="Sci. Signal.">
        <title>Quantitative phosphoproteomic analysis of T cell receptor signaling reveals system-wide modulation of protein-protein interactions.</title>
        <authorList>
            <person name="Mayya V."/>
            <person name="Lundgren D.H."/>
            <person name="Hwang S.-I."/>
            <person name="Rezaul K."/>
            <person name="Wu L."/>
            <person name="Eng J.K."/>
            <person name="Rodionov V."/>
            <person name="Han D.K."/>
        </authorList>
    </citation>
    <scope>PHOSPHORYLATION [LARGE SCALE ANALYSIS] AT THR-113 (ISOFORM 2)</scope>
    <scope>IDENTIFICATION BY MASS SPECTROMETRY [LARGE SCALE ANALYSIS]</scope>
    <source>
        <tissue>Leukemic T-cell</tissue>
    </source>
</reference>
<reference key="13">
    <citation type="journal article" date="2013" name="J. Proteome Res.">
        <title>Toward a comprehensive characterization of a human cancer cell phosphoproteome.</title>
        <authorList>
            <person name="Zhou H."/>
            <person name="Di Palma S."/>
            <person name="Preisinger C."/>
            <person name="Peng M."/>
            <person name="Polat A.N."/>
            <person name="Heck A.J."/>
            <person name="Mohammed S."/>
        </authorList>
    </citation>
    <scope>PHOSPHORYLATION [LARGE SCALE ANALYSIS] AT THR-221; THR-469; SER-551; SER-626 AND SER-866</scope>
    <scope>IDENTIFICATION BY MASS SPECTROMETRY [LARGE SCALE ANALYSIS]</scope>
    <source>
        <tissue>Cervix carcinoma</tissue>
        <tissue>Erythroleukemia</tissue>
    </source>
</reference>
<reference key="14">
    <citation type="journal article" date="2014" name="J. Proteomics">
        <title>An enzyme assisted RP-RPLC approach for in-depth analysis of human liver phosphoproteome.</title>
        <authorList>
            <person name="Bian Y."/>
            <person name="Song C."/>
            <person name="Cheng K."/>
            <person name="Dong M."/>
            <person name="Wang F."/>
            <person name="Huang J."/>
            <person name="Sun D."/>
            <person name="Wang L."/>
            <person name="Ye M."/>
            <person name="Zou H."/>
        </authorList>
    </citation>
    <scope>PHOSPHORYLATION [LARGE SCALE ANALYSIS] AT THR-469; SER-626 AND SER-978</scope>
    <scope>IDENTIFICATION BY MASS SPECTROMETRY [LARGE SCALE ANALYSIS]</scope>
    <source>
        <tissue>Liver</tissue>
    </source>
</reference>
<reference key="15">
    <citation type="journal article" date="2018" name="FEBS J.">
        <title>14-3-3 proteins mediate inhibitory effects of cAMP on salt-inducible kinases (SIKs).</title>
        <authorList>
            <person name="Sonntag T."/>
            <person name="Vaughan J.M."/>
            <person name="Montminy M."/>
        </authorList>
    </citation>
    <scope>FUNCTION</scope>
    <scope>INTERACTION WITH 14-3-3 PROTEINS</scope>
    <scope>PTM</scope>
    <scope>MUTAGENESIS OF THR-469; SER-551 AND SER-626</scope>
</reference>
<reference key="16">
    <citation type="journal article" date="2006" name="Science">
        <title>The consensus coding sequences of human breast and colorectal cancers.</title>
        <authorList>
            <person name="Sjoeblom T."/>
            <person name="Jones S."/>
            <person name="Wood L.D."/>
            <person name="Parsons D.W."/>
            <person name="Lin J."/>
            <person name="Barber T.D."/>
            <person name="Mandelker D."/>
            <person name="Leary R.J."/>
            <person name="Ptak J."/>
            <person name="Silliman N."/>
            <person name="Szabo S."/>
            <person name="Buckhaults P."/>
            <person name="Farrell C."/>
            <person name="Meeh P."/>
            <person name="Markowitz S.D."/>
            <person name="Willis J."/>
            <person name="Dawson D."/>
            <person name="Willson J.K.V."/>
            <person name="Gazdar A.F."/>
            <person name="Hartigan J."/>
            <person name="Wu L."/>
            <person name="Liu C."/>
            <person name="Parmigiani G."/>
            <person name="Park B.H."/>
            <person name="Bachman K.E."/>
            <person name="Papadopoulos N."/>
            <person name="Vogelstein B."/>
            <person name="Kinzler K.W."/>
            <person name="Velculescu V.E."/>
        </authorList>
    </citation>
    <scope>VARIANTS [LARGE SCALE ANALYSIS] LEU-389 AND VAL-1161</scope>
</reference>
<reference key="17">
    <citation type="journal article" date="2018" name="Sci. Transl. Med.">
        <title>The PTH/PTHrP-SIK3 pathway affects skeletogenesis through altered mTOR signaling.</title>
        <authorList>
            <person name="Csukasi F."/>
            <person name="Duran I."/>
            <person name="Barad M."/>
            <person name="Barta T."/>
            <person name="Gudernova I."/>
            <person name="Trantirek L."/>
            <person name="Martin J.H."/>
            <person name="Kuo C.Y."/>
            <person name="Woods J."/>
            <person name="Lee H."/>
            <person name="Cohn D.H."/>
            <person name="Krejci P."/>
            <person name="Krakow D."/>
        </authorList>
    </citation>
    <scope>INVOLVEMENT IN SEMDK</scope>
    <scope>VARIANT SEMDK CYS-187</scope>
    <scope>CHARACTERIZATION OF VARIANT SEMDK CYS-187</scope>
    <scope>FUNCTION</scope>
    <scope>INTERACTION WITH DEPTOR; MLST8; RICTOR AND RPTOR</scope>
    <scope>CATALYTIC ACTIVITY</scope>
    <scope>TISSUE SPECIFICITY</scope>
    <scope>PHOSPHORYLATION AT THR-221</scope>
</reference>
<dbReference type="EC" id="2.7.11.1" evidence="10"/>
<dbReference type="EMBL" id="AB023216">
    <property type="protein sequence ID" value="BAA76843.2"/>
    <property type="status" value="ALT_INIT"/>
    <property type="molecule type" value="mRNA"/>
</dbReference>
<dbReference type="EMBL" id="AP000936">
    <property type="status" value="NOT_ANNOTATED_CDS"/>
    <property type="molecule type" value="Genomic_DNA"/>
</dbReference>
<dbReference type="EMBL" id="AP003070">
    <property type="status" value="NOT_ANNOTATED_CDS"/>
    <property type="molecule type" value="Genomic_DNA"/>
</dbReference>
<dbReference type="EMBL" id="AP006216">
    <property type="status" value="NOT_ANNOTATED_CDS"/>
    <property type="molecule type" value="Genomic_DNA"/>
</dbReference>
<dbReference type="EMBL" id="BC035583">
    <property type="protein sequence ID" value="AAH35583.3"/>
    <property type="molecule type" value="mRNA"/>
</dbReference>
<dbReference type="EMBL" id="BC063887">
    <property type="protein sequence ID" value="AAH63887.1"/>
    <property type="status" value="ALT_INIT"/>
    <property type="molecule type" value="mRNA"/>
</dbReference>
<dbReference type="EMBL" id="BC086858">
    <property type="protein sequence ID" value="AAH86858.1"/>
    <property type="molecule type" value="mRNA"/>
</dbReference>
<dbReference type="EMBL" id="BC128510">
    <property type="protein sequence ID" value="AAI28511.1"/>
    <property type="status" value="ALT_INIT"/>
    <property type="molecule type" value="mRNA"/>
</dbReference>
<dbReference type="EMBL" id="AB209327">
    <property type="protein sequence ID" value="BAD92564.1"/>
    <property type="molecule type" value="mRNA"/>
</dbReference>
<dbReference type="EMBL" id="AK022302">
    <property type="protein sequence ID" value="BAB14006.1"/>
    <property type="status" value="ALT_INIT"/>
    <property type="molecule type" value="mRNA"/>
</dbReference>
<dbReference type="EMBL" id="AY598338">
    <property type="protein sequence ID" value="AAT06749.1"/>
    <property type="molecule type" value="mRNA"/>
</dbReference>
<dbReference type="CCDS" id="CCDS60974.1">
    <molecule id="Q9Y2K2-8"/>
</dbReference>
<dbReference type="CCDS" id="CCDS8379.2">
    <molecule id="Q9Y2K2-5"/>
</dbReference>
<dbReference type="RefSeq" id="NP_001268678.1">
    <molecule id="Q9Y2K2-8"/>
    <property type="nucleotide sequence ID" value="NM_001281749.3"/>
</dbReference>
<dbReference type="RefSeq" id="NP_079440.3">
    <molecule id="Q9Y2K2-5"/>
    <property type="nucleotide sequence ID" value="NM_025164.4"/>
</dbReference>
<dbReference type="PDB" id="8OKU">
    <property type="method" value="X-ray"/>
    <property type="resolution" value="3.10 A"/>
    <property type="chains" value="A/B=60-394"/>
</dbReference>
<dbReference type="PDB" id="8R4O">
    <property type="method" value="X-ray"/>
    <property type="resolution" value="2.73 A"/>
    <property type="chains" value="A/C/E/G/I/K=59-385"/>
</dbReference>
<dbReference type="PDB" id="8R4Q">
    <property type="method" value="X-ray"/>
    <property type="resolution" value="2.84 A"/>
    <property type="chains" value="A/C/E/G/I/K=59-385"/>
</dbReference>
<dbReference type="PDB" id="8R4U">
    <property type="method" value="X-ray"/>
    <property type="resolution" value="2.42 A"/>
    <property type="chains" value="A/C/E/G=59-385"/>
</dbReference>
<dbReference type="PDB" id="8R4V">
    <property type="method" value="X-ray"/>
    <property type="resolution" value="1.90 A"/>
    <property type="chains" value="A/B/C=59-385"/>
</dbReference>
<dbReference type="PDBsum" id="8OKU"/>
<dbReference type="PDBsum" id="8R4O"/>
<dbReference type="PDBsum" id="8R4Q"/>
<dbReference type="PDBsum" id="8R4U"/>
<dbReference type="PDBsum" id="8R4V"/>
<dbReference type="SMR" id="Q9Y2K2"/>
<dbReference type="BioGRID" id="116963">
    <property type="interactions" value="76"/>
</dbReference>
<dbReference type="FunCoup" id="Q9Y2K2">
    <property type="interactions" value="2252"/>
</dbReference>
<dbReference type="IntAct" id="Q9Y2K2">
    <property type="interactions" value="59"/>
</dbReference>
<dbReference type="MINT" id="Q9Y2K2"/>
<dbReference type="STRING" id="9606.ENSP00000364449"/>
<dbReference type="BindingDB" id="Q9Y2K2"/>
<dbReference type="ChEMBL" id="CHEMBL6149"/>
<dbReference type="DrugBank" id="DB12010">
    <property type="generic name" value="Fostamatinib"/>
</dbReference>
<dbReference type="DrugCentral" id="Q9Y2K2"/>
<dbReference type="GuidetoPHARMACOLOGY" id="2199"/>
<dbReference type="GlyGen" id="Q9Y2K2">
    <property type="glycosylation" value="4 sites, 1 O-linked glycan (1 site)"/>
</dbReference>
<dbReference type="iPTMnet" id="Q9Y2K2"/>
<dbReference type="PhosphoSitePlus" id="Q9Y2K2"/>
<dbReference type="SwissPalm" id="Q9Y2K2"/>
<dbReference type="BioMuta" id="SIK3"/>
<dbReference type="DMDM" id="115502238"/>
<dbReference type="jPOST" id="Q9Y2K2"/>
<dbReference type="MassIVE" id="Q9Y2K2"/>
<dbReference type="PaxDb" id="9606-ENSP00000364449"/>
<dbReference type="PeptideAtlas" id="Q9Y2K2"/>
<dbReference type="ProteomicsDB" id="108"/>
<dbReference type="ProteomicsDB" id="34706"/>
<dbReference type="Pumba" id="Q9Y2K2"/>
<dbReference type="ABCD" id="Q9Y2K2">
    <property type="antibodies" value="6 sequenced antibodies"/>
</dbReference>
<dbReference type="Antibodypedia" id="56803">
    <property type="antibodies" value="167 antibodies from 27 providers"/>
</dbReference>
<dbReference type="DNASU" id="23387"/>
<dbReference type="Ensembl" id="ENST00000375300.6">
    <molecule id="Q9Y2K2-5"/>
    <property type="protein sequence ID" value="ENSP00000364449.1"/>
    <property type="gene ID" value="ENSG00000160584.17"/>
</dbReference>
<dbReference type="Ensembl" id="ENST00000446921.6">
    <molecule id="Q9Y2K2-8"/>
    <property type="protein sequence ID" value="ENSP00000390442.2"/>
    <property type="gene ID" value="ENSG00000160584.17"/>
</dbReference>
<dbReference type="GeneID" id="23387"/>
<dbReference type="KEGG" id="hsa:23387"/>
<dbReference type="AGR" id="HGNC:29165"/>
<dbReference type="CTD" id="23387"/>
<dbReference type="DisGeNET" id="23387"/>
<dbReference type="GeneCards" id="SIK3"/>
<dbReference type="HGNC" id="HGNC:29165">
    <property type="gene designation" value="SIK3"/>
</dbReference>
<dbReference type="HPA" id="ENSG00000160584">
    <property type="expression patterns" value="Low tissue specificity"/>
</dbReference>
<dbReference type="MalaCards" id="SIK3"/>
<dbReference type="MIM" id="614776">
    <property type="type" value="gene"/>
</dbReference>
<dbReference type="MIM" id="618162">
    <property type="type" value="phenotype"/>
</dbReference>
<dbReference type="neXtProt" id="NX_Q9Y2K2"/>
<dbReference type="OpenTargets" id="ENSG00000160584"/>
<dbReference type="PharmGKB" id="PA165543631"/>
<dbReference type="VEuPathDB" id="HostDB:ENSG00000160584"/>
<dbReference type="eggNOG" id="KOG0586">
    <property type="taxonomic scope" value="Eukaryota"/>
</dbReference>
<dbReference type="GeneTree" id="ENSGT00940000157259"/>
<dbReference type="InParanoid" id="Q9Y2K2"/>
<dbReference type="OMA" id="HRYIYKD"/>
<dbReference type="OrthoDB" id="10045473at2759"/>
<dbReference type="PAN-GO" id="Q9Y2K2">
    <property type="GO annotations" value="5 GO annotations based on evolutionary models"/>
</dbReference>
<dbReference type="PhylomeDB" id="Q9Y2K2"/>
<dbReference type="TreeFam" id="TF315213"/>
<dbReference type="PathwayCommons" id="Q9Y2K2"/>
<dbReference type="SignaLink" id="Q9Y2K2"/>
<dbReference type="SIGNOR" id="Q9Y2K2"/>
<dbReference type="BioGRID-ORCS" id="23387">
    <property type="hits" value="25 hits in 1077 CRISPR screens"/>
</dbReference>
<dbReference type="ChiTaRS" id="SIK3">
    <property type="organism name" value="human"/>
</dbReference>
<dbReference type="GeneWiki" id="KIAA0999"/>
<dbReference type="GenomeRNAi" id="23387"/>
<dbReference type="Pharos" id="Q9Y2K2">
    <property type="development level" value="Tchem"/>
</dbReference>
<dbReference type="PRO" id="PR:Q9Y2K2"/>
<dbReference type="Proteomes" id="UP000005640">
    <property type="component" value="Chromosome 11"/>
</dbReference>
<dbReference type="RNAct" id="Q9Y2K2">
    <property type="molecule type" value="protein"/>
</dbReference>
<dbReference type="Bgee" id="ENSG00000160584">
    <property type="expression patterns" value="Expressed in lateral globus pallidus and 208 other cell types or tissues"/>
</dbReference>
<dbReference type="ExpressionAtlas" id="Q9Y2K2">
    <property type="expression patterns" value="baseline and differential"/>
</dbReference>
<dbReference type="GO" id="GO:0005737">
    <property type="term" value="C:cytoplasm"/>
    <property type="evidence" value="ECO:0000318"/>
    <property type="project" value="GO_Central"/>
</dbReference>
<dbReference type="GO" id="GO:0005524">
    <property type="term" value="F:ATP binding"/>
    <property type="evidence" value="ECO:0000314"/>
    <property type="project" value="UniProtKB"/>
</dbReference>
<dbReference type="GO" id="GO:0000287">
    <property type="term" value="F:magnesium ion binding"/>
    <property type="evidence" value="ECO:0000314"/>
    <property type="project" value="UniProtKB"/>
</dbReference>
<dbReference type="GO" id="GO:0106310">
    <property type="term" value="F:protein serine kinase activity"/>
    <property type="evidence" value="ECO:0007669"/>
    <property type="project" value="RHEA"/>
</dbReference>
<dbReference type="GO" id="GO:0004674">
    <property type="term" value="F:protein serine/threonine kinase activity"/>
    <property type="evidence" value="ECO:0000314"/>
    <property type="project" value="UniProtKB"/>
</dbReference>
<dbReference type="GO" id="GO:0050321">
    <property type="term" value="F:tau-protein kinase activity"/>
    <property type="evidence" value="ECO:0000318"/>
    <property type="project" value="GO_Central"/>
</dbReference>
<dbReference type="GO" id="GO:0035556">
    <property type="term" value="P:intracellular signal transduction"/>
    <property type="evidence" value="ECO:0000318"/>
    <property type="project" value="GO_Central"/>
</dbReference>
<dbReference type="GO" id="GO:0000226">
    <property type="term" value="P:microtubule cytoskeleton organization"/>
    <property type="evidence" value="ECO:0000318"/>
    <property type="project" value="GO_Central"/>
</dbReference>
<dbReference type="GO" id="GO:1904263">
    <property type="term" value="P:positive regulation of TORC1 signaling"/>
    <property type="evidence" value="ECO:0000315"/>
    <property type="project" value="UniProtKB"/>
</dbReference>
<dbReference type="GO" id="GO:1904515">
    <property type="term" value="P:positive regulation of TORC2 signaling"/>
    <property type="evidence" value="ECO:0000315"/>
    <property type="project" value="UniProtKB"/>
</dbReference>
<dbReference type="GO" id="GO:0006468">
    <property type="term" value="P:protein phosphorylation"/>
    <property type="evidence" value="ECO:0000314"/>
    <property type="project" value="UniProtKB"/>
</dbReference>
<dbReference type="CDD" id="cd14071">
    <property type="entry name" value="STKc_SIK"/>
    <property type="match status" value="1"/>
</dbReference>
<dbReference type="CDD" id="cd14410">
    <property type="entry name" value="UBA_SIK3"/>
    <property type="match status" value="1"/>
</dbReference>
<dbReference type="FunFam" id="3.30.200.20:FF:000003">
    <property type="entry name" value="Non-specific serine/threonine protein kinase"/>
    <property type="match status" value="1"/>
</dbReference>
<dbReference type="FunFam" id="1.10.510.10:FF:000156">
    <property type="entry name" value="Serine/threonine-protein kinase SIK3 homolog"/>
    <property type="match status" value="1"/>
</dbReference>
<dbReference type="Gene3D" id="1.10.510.10">
    <property type="entry name" value="Transferase(Phosphotransferase) domain 1"/>
    <property type="match status" value="1"/>
</dbReference>
<dbReference type="InterPro" id="IPR011009">
    <property type="entry name" value="Kinase-like_dom_sf"/>
</dbReference>
<dbReference type="InterPro" id="IPR000719">
    <property type="entry name" value="Prot_kinase_dom"/>
</dbReference>
<dbReference type="InterPro" id="IPR017441">
    <property type="entry name" value="Protein_kinase_ATP_BS"/>
</dbReference>
<dbReference type="InterPro" id="IPR008271">
    <property type="entry name" value="Ser/Thr_kinase_AS"/>
</dbReference>
<dbReference type="InterPro" id="IPR034672">
    <property type="entry name" value="SIK"/>
</dbReference>
<dbReference type="InterPro" id="IPR015940">
    <property type="entry name" value="UBA"/>
</dbReference>
<dbReference type="PANTHER" id="PTHR24346">
    <property type="entry name" value="MAP/MICROTUBULE AFFINITY-REGULATING KINASE"/>
    <property type="match status" value="1"/>
</dbReference>
<dbReference type="PANTHER" id="PTHR24346:SF42">
    <property type="entry name" value="SERINE_THREONINE-PROTEIN KINASE SIK3"/>
    <property type="match status" value="1"/>
</dbReference>
<dbReference type="Pfam" id="PF00069">
    <property type="entry name" value="Pkinase"/>
    <property type="match status" value="1"/>
</dbReference>
<dbReference type="Pfam" id="PF23312">
    <property type="entry name" value="UBA_SIK3"/>
    <property type="match status" value="1"/>
</dbReference>
<dbReference type="SMART" id="SM00220">
    <property type="entry name" value="S_TKc"/>
    <property type="match status" value="1"/>
</dbReference>
<dbReference type="SUPFAM" id="SSF56112">
    <property type="entry name" value="Protein kinase-like (PK-like)"/>
    <property type="match status" value="1"/>
</dbReference>
<dbReference type="PROSITE" id="PS00107">
    <property type="entry name" value="PROTEIN_KINASE_ATP"/>
    <property type="match status" value="1"/>
</dbReference>
<dbReference type="PROSITE" id="PS50011">
    <property type="entry name" value="PROTEIN_KINASE_DOM"/>
    <property type="match status" value="1"/>
</dbReference>
<dbReference type="PROSITE" id="PS00108">
    <property type="entry name" value="PROTEIN_KINASE_ST"/>
    <property type="match status" value="1"/>
</dbReference>
<dbReference type="PROSITE" id="PS50030">
    <property type="entry name" value="UBA"/>
    <property type="match status" value="1"/>
</dbReference>
<organism>
    <name type="scientific">Homo sapiens</name>
    <name type="common">Human</name>
    <dbReference type="NCBI Taxonomy" id="9606"/>
    <lineage>
        <taxon>Eukaryota</taxon>
        <taxon>Metazoa</taxon>
        <taxon>Chordata</taxon>
        <taxon>Craniata</taxon>
        <taxon>Vertebrata</taxon>
        <taxon>Euteleostomi</taxon>
        <taxon>Mammalia</taxon>
        <taxon>Eutheria</taxon>
        <taxon>Euarchontoglires</taxon>
        <taxon>Primates</taxon>
        <taxon>Haplorrhini</taxon>
        <taxon>Catarrhini</taxon>
        <taxon>Hominidae</taxon>
        <taxon>Homo</taxon>
    </lineage>
</organism>
<comment type="function">
    <text evidence="1 11 16">Positive regulator of mTOR signaling that functions by triggering the degradation of DEPTOR, an mTOR inhibitor. Involved in the dynamic regulation of mTOR signaling in chondrocyte differentiation during skeletogenesis (PubMed:30232230). Negatively regulates cAMP signaling pathway possibly by acting on CRTC2/TORC2 and CRTC3/TORC3 (Probable). Prevents HDAC4 translocation to the nucleus (By similarity).</text>
</comment>
<comment type="catalytic activity">
    <reaction evidence="11">
        <text>L-seryl-[protein] + ATP = O-phospho-L-seryl-[protein] + ADP + H(+)</text>
        <dbReference type="Rhea" id="RHEA:17989"/>
        <dbReference type="Rhea" id="RHEA-COMP:9863"/>
        <dbReference type="Rhea" id="RHEA-COMP:11604"/>
        <dbReference type="ChEBI" id="CHEBI:15378"/>
        <dbReference type="ChEBI" id="CHEBI:29999"/>
        <dbReference type="ChEBI" id="CHEBI:30616"/>
        <dbReference type="ChEBI" id="CHEBI:83421"/>
        <dbReference type="ChEBI" id="CHEBI:456216"/>
        <dbReference type="EC" id="2.7.11.1"/>
    </reaction>
</comment>
<comment type="catalytic activity">
    <reaction evidence="11">
        <text>L-threonyl-[protein] + ATP = O-phospho-L-threonyl-[protein] + ADP + H(+)</text>
        <dbReference type="Rhea" id="RHEA:46608"/>
        <dbReference type="Rhea" id="RHEA-COMP:11060"/>
        <dbReference type="Rhea" id="RHEA-COMP:11605"/>
        <dbReference type="ChEBI" id="CHEBI:15378"/>
        <dbReference type="ChEBI" id="CHEBI:30013"/>
        <dbReference type="ChEBI" id="CHEBI:30616"/>
        <dbReference type="ChEBI" id="CHEBI:61977"/>
        <dbReference type="ChEBI" id="CHEBI:456216"/>
        <dbReference type="EC" id="2.7.11.1"/>
    </reaction>
</comment>
<comment type="cofactor">
    <cofactor evidence="2">
        <name>Mg(2+)</name>
        <dbReference type="ChEBI" id="CHEBI:18420"/>
    </cofactor>
</comment>
<comment type="activity regulation">
    <text evidence="2">Activated by phosphorylation on Thr-221.</text>
</comment>
<comment type="subunit">
    <text evidence="1 8 10 11">Binds to and is activated by YWHAZ when phosphorylated on Thr-221 (PubMed:16306228). Interacts with 14-3-3 proteins (PubMed:29211348). Interacts with HDAC4; this interaction leads to HDAC4 retention in the cytoplasm (By similarity). Interacts with DEPTOR, MLST8/GbetaL, RICTOR and RPTOR (PubMed:30232230).</text>
</comment>
<comment type="interaction">
    <interactant intactId="EBI-1181460">
        <id>Q9Y2K2</id>
    </interactant>
    <interactant intactId="EBI-347088">
        <id>P63104</id>
        <label>YWHAZ</label>
    </interactant>
    <organismsDiffer>false</organismsDiffer>
    <experiments>8</experiments>
</comment>
<comment type="interaction">
    <interactant intactId="EBI-17172855">
        <id>Q9Y2K2-7</id>
    </interactant>
    <interactant intactId="EBI-466029">
        <id>P42858</id>
        <label>HTT</label>
    </interactant>
    <organismsDiffer>false</organismsDiffer>
    <experiments>3</experiments>
</comment>
<comment type="interaction">
    <interactant intactId="EBI-17172855">
        <id>Q9Y2K2-7</id>
    </interactant>
    <interactant intactId="EBI-359224">
        <id>Q13077</id>
        <label>TRAF1</label>
    </interactant>
    <organismsDiffer>false</organismsDiffer>
    <experiments>3</experiments>
</comment>
<comment type="interaction">
    <interactant intactId="EBI-17172855">
        <id>Q9Y2K2-7</id>
    </interactant>
    <interactant intactId="EBI-742327">
        <id>Q15654</id>
        <label>TRIP6</label>
    </interactant>
    <organismsDiffer>false</organismsDiffer>
    <experiments>3</experiments>
</comment>
<comment type="subcellular location">
    <subcellularLocation>
        <location evidence="8">Cytoplasm</location>
    </subcellularLocation>
    <text evidence="8">Locates to punctate structures within the cytoplasm on binding to YWHAZ.</text>
</comment>
<comment type="alternative products">
    <event type="alternative splicing"/>
    <isoform>
        <id>Q9Y2K2-5</id>
        <name>1</name>
        <sequence type="displayed"/>
    </isoform>
    <isoform>
        <id>Q9Y2K2-6</id>
        <name>2</name>
        <sequence type="described" ref="VSP_059412 VSP_059415"/>
    </isoform>
    <isoform>
        <id>Q9Y2K2-7</id>
        <name>3</name>
        <sequence type="described" ref="VSP_059416 VSP_059417"/>
    </isoform>
    <isoform>
        <id>Q9Y2K2-8</id>
        <name>4</name>
        <sequence type="described" ref="VSP_059413 VSP_059414 VSP_059415"/>
    </isoform>
</comment>
<comment type="tissue specificity">
    <text evidence="11">Expressed in chondrocytes.</text>
</comment>
<comment type="PTM">
    <text evidence="7 11 16">Phosphorylated at Thr-221 by STK11/LKB1 in complex with STE20-related adapter-alpha (STRADA) pseudo kinase and CAB39 (PubMed:14976552). Phosphorylation at Thr-221 is inhibited in response to PTHLH/PTHrP (PubMed:30232230). Phosphorylated at Thr-469 and Ser-551 in response to cAMP signaling (Probable).</text>
</comment>
<comment type="disease" evidence="11">
    <disease id="DI-05362">
        <name>Spondyloepimetaphyseal dysplasia, Krakow type</name>
        <acronym>SEMDK</acronym>
        <description>An autosomal recessive skeletal disorder characterized by severe spondyloepimetaphyseal dysplasia, rhizomelia, mesomelia with significant anterior bowing of all limbs, severe immunodeficiency, and developmental delay.</description>
        <dbReference type="MIM" id="618162"/>
    </disease>
    <text>The disease is caused by variants affecting the gene represented in this entry.</text>
</comment>
<comment type="similarity">
    <text evidence="15">Belongs to the protein kinase superfamily. CAMK Ser/Thr protein kinase family. SNF1 subfamily.</text>
</comment>
<comment type="sequence caution" evidence="15">
    <conflict type="erroneous initiation">
        <sequence resource="EMBL-CDS" id="AAH63887"/>
    </conflict>
    <text>Truncated N-terminus.</text>
</comment>
<comment type="sequence caution" evidence="15">
    <conflict type="erroneous initiation">
        <sequence resource="EMBL-CDS" id="AAI28511"/>
    </conflict>
    <text>Truncated N-terminus.</text>
</comment>
<comment type="sequence caution" evidence="15">
    <conflict type="erroneous initiation">
        <sequence resource="EMBL-CDS" id="BAA76843"/>
    </conflict>
    <text>Extended N-terminus.</text>
</comment>
<comment type="sequence caution" evidence="15">
    <conflict type="erroneous initiation">
        <sequence resource="EMBL-CDS" id="BAB14006"/>
    </conflict>
    <text>Truncated N-terminus.</text>
</comment>
<name>SIK3_HUMAN</name>
<protein>
    <recommendedName>
        <fullName evidence="15">Serine/threonine-protein kinase SIK3</fullName>
        <ecNumber evidence="10">2.7.11.1</ecNumber>
    </recommendedName>
    <alternativeName>
        <fullName>Salt-inducible kinase 3</fullName>
        <shortName>SIK-3</shortName>
    </alternativeName>
    <alternativeName>
        <fullName>Serine/threonine-protein kinase QSK</fullName>
    </alternativeName>
</protein>
<evidence type="ECO:0000250" key="1">
    <source>
        <dbReference type="UniProtKB" id="Q6P4S6"/>
    </source>
</evidence>
<evidence type="ECO:0000250" key="2">
    <source>
        <dbReference type="UniProtKB" id="Q9H0K1"/>
    </source>
</evidence>
<evidence type="ECO:0000255" key="3">
    <source>
        <dbReference type="PROSITE-ProRule" id="PRU00159"/>
    </source>
</evidence>
<evidence type="ECO:0000255" key="4">
    <source>
        <dbReference type="PROSITE-ProRule" id="PRU00212"/>
    </source>
</evidence>
<evidence type="ECO:0000255" key="5">
    <source>
        <dbReference type="PROSITE-ProRule" id="PRU10027"/>
    </source>
</evidence>
<evidence type="ECO:0000256" key="6">
    <source>
        <dbReference type="SAM" id="MobiDB-lite"/>
    </source>
</evidence>
<evidence type="ECO:0000269" key="7">
    <source>
    </source>
</evidence>
<evidence type="ECO:0000269" key="8">
    <source>
    </source>
</evidence>
<evidence type="ECO:0000269" key="9">
    <source>
    </source>
</evidence>
<evidence type="ECO:0000269" key="10">
    <source>
    </source>
</evidence>
<evidence type="ECO:0000269" key="11">
    <source>
    </source>
</evidence>
<evidence type="ECO:0000269" key="12">
    <source ref="6"/>
</evidence>
<evidence type="ECO:0000303" key="13">
    <source>
    </source>
</evidence>
<evidence type="ECO:0000303" key="14">
    <source>
    </source>
</evidence>
<evidence type="ECO:0000305" key="15"/>
<evidence type="ECO:0000305" key="16">
    <source>
    </source>
</evidence>
<evidence type="ECO:0000312" key="17">
    <source>
        <dbReference type="HGNC" id="HGNC:29165"/>
    </source>
</evidence>
<evidence type="ECO:0007744" key="18">
    <source>
    </source>
</evidence>
<evidence type="ECO:0007744" key="19">
    <source>
    </source>
</evidence>
<evidence type="ECO:0007744" key="20">
    <source>
    </source>
</evidence>
<evidence type="ECO:0007744" key="21">
    <source>
    </source>
</evidence>
<evidence type="ECO:0007744" key="22">
    <source>
    </source>
</evidence>
<evidence type="ECO:0007829" key="23">
    <source>
        <dbReference type="PDB" id="8R4O"/>
    </source>
</evidence>
<evidence type="ECO:0007829" key="24">
    <source>
        <dbReference type="PDB" id="8R4U"/>
    </source>
</evidence>
<evidence type="ECO:0007829" key="25">
    <source>
        <dbReference type="PDB" id="8R4V"/>
    </source>
</evidence>
<keyword id="KW-0002">3D-structure</keyword>
<keyword id="KW-0025">Alternative splicing</keyword>
<keyword id="KW-0067">ATP-binding</keyword>
<keyword id="KW-0963">Cytoplasm</keyword>
<keyword id="KW-0225">Disease variant</keyword>
<keyword id="KW-0242">Dwarfism</keyword>
<keyword id="KW-0418">Kinase</keyword>
<keyword id="KW-0460">Magnesium</keyword>
<keyword id="KW-0479">Metal-binding</keyword>
<keyword id="KW-0488">Methylation</keyword>
<keyword id="KW-0547">Nucleotide-binding</keyword>
<keyword id="KW-0597">Phosphoprotein</keyword>
<keyword id="KW-1267">Proteomics identification</keyword>
<keyword id="KW-1185">Reference proteome</keyword>
<keyword id="KW-0723">Serine/threonine-protein kinase</keyword>
<keyword id="KW-0808">Transferase</keyword>